<name>PT314_ARATH</name>
<comment type="subcellular location">
    <subcellularLocation>
        <location evidence="3">Membrane</location>
        <topology evidence="3">Multi-pass membrane protein</topology>
    </subcellularLocation>
</comment>
<comment type="similarity">
    <text evidence="3">Belongs to the TPT transporter family. TPT (TC 2.A.7.9) subfamily.</text>
</comment>
<comment type="sequence caution" evidence="3">
    <conflict type="erroneous gene model prediction">
        <sequence resource="EMBL-CDS" id="BAB01046"/>
    </conflict>
</comment>
<keyword id="KW-0472">Membrane</keyword>
<keyword id="KW-1185">Reference proteome</keyword>
<keyword id="KW-0762">Sugar transport</keyword>
<keyword id="KW-0812">Transmembrane</keyword>
<keyword id="KW-1133">Transmembrane helix</keyword>
<keyword id="KW-0813">Transport</keyword>
<gene>
    <name type="ordered locus">At3g14410</name>
    <name type="ORF">MLN21.19</name>
</gene>
<reference key="1">
    <citation type="journal article" date="2000" name="DNA Res.">
        <title>Structural analysis of Arabidopsis thaliana chromosome 3. I. Sequence features of the regions of 4,504,864 bp covered by sixty P1 and TAC clones.</title>
        <authorList>
            <person name="Sato S."/>
            <person name="Nakamura Y."/>
            <person name="Kaneko T."/>
            <person name="Katoh T."/>
            <person name="Asamizu E."/>
            <person name="Tabata S."/>
        </authorList>
    </citation>
    <scope>NUCLEOTIDE SEQUENCE [LARGE SCALE GENOMIC DNA]</scope>
    <source>
        <strain>cv. Columbia</strain>
    </source>
</reference>
<reference key="2">
    <citation type="journal article" date="2017" name="Plant J.">
        <title>Araport11: a complete reannotation of the Arabidopsis thaliana reference genome.</title>
        <authorList>
            <person name="Cheng C.Y."/>
            <person name="Krishnakumar V."/>
            <person name="Chan A.P."/>
            <person name="Thibaud-Nissen F."/>
            <person name="Schobel S."/>
            <person name="Town C.D."/>
        </authorList>
    </citation>
    <scope>GENOME REANNOTATION</scope>
    <source>
        <strain>cv. Columbia</strain>
    </source>
</reference>
<reference key="3">
    <citation type="journal article" date="2003" name="Science">
        <title>Empirical analysis of transcriptional activity in the Arabidopsis genome.</title>
        <authorList>
            <person name="Yamada K."/>
            <person name="Lim J."/>
            <person name="Dale J.M."/>
            <person name="Chen H."/>
            <person name="Shinn P."/>
            <person name="Palm C.J."/>
            <person name="Southwick A.M."/>
            <person name="Wu H.C."/>
            <person name="Kim C.J."/>
            <person name="Nguyen M."/>
            <person name="Pham P.K."/>
            <person name="Cheuk R.F."/>
            <person name="Karlin-Newmann G."/>
            <person name="Liu S.X."/>
            <person name="Lam B."/>
            <person name="Sakano H."/>
            <person name="Wu T."/>
            <person name="Yu G."/>
            <person name="Miranda M."/>
            <person name="Quach H.L."/>
            <person name="Tripp M."/>
            <person name="Chang C.H."/>
            <person name="Lee J.M."/>
            <person name="Toriumi M.J."/>
            <person name="Chan M.M."/>
            <person name="Tang C.C."/>
            <person name="Onodera C.S."/>
            <person name="Deng J.M."/>
            <person name="Akiyama K."/>
            <person name="Ansari Y."/>
            <person name="Arakawa T."/>
            <person name="Banh J."/>
            <person name="Banno F."/>
            <person name="Bowser L."/>
            <person name="Brooks S.Y."/>
            <person name="Carninci P."/>
            <person name="Chao Q."/>
            <person name="Choy N."/>
            <person name="Enju A."/>
            <person name="Goldsmith A.D."/>
            <person name="Gurjal M."/>
            <person name="Hansen N.F."/>
            <person name="Hayashizaki Y."/>
            <person name="Johnson-Hopson C."/>
            <person name="Hsuan V.W."/>
            <person name="Iida K."/>
            <person name="Karnes M."/>
            <person name="Khan S."/>
            <person name="Koesema E."/>
            <person name="Ishida J."/>
            <person name="Jiang P.X."/>
            <person name="Jones T."/>
            <person name="Kawai J."/>
            <person name="Kamiya A."/>
            <person name="Meyers C."/>
            <person name="Nakajima M."/>
            <person name="Narusaka M."/>
            <person name="Seki M."/>
            <person name="Sakurai T."/>
            <person name="Satou M."/>
            <person name="Tamse R."/>
            <person name="Vaysberg M."/>
            <person name="Wallender E.K."/>
            <person name="Wong C."/>
            <person name="Yamamura Y."/>
            <person name="Yuan S."/>
            <person name="Shinozaki K."/>
            <person name="Davis R.W."/>
            <person name="Theologis A."/>
            <person name="Ecker J.R."/>
        </authorList>
    </citation>
    <scope>NUCLEOTIDE SEQUENCE [LARGE SCALE MRNA]</scope>
    <source>
        <strain>cv. Columbia</strain>
    </source>
</reference>
<reference key="4">
    <citation type="journal article" date="2014" name="Proc. Natl. Acad. Sci. U.S.A.">
        <title>The Golgi localized bifunctional UDP-rhamnose/UDP-galactose transporter family of Arabidopsis.</title>
        <authorList>
            <person name="Rautengarten C."/>
            <person name="Ebert B."/>
            <person name="Moreno I."/>
            <person name="Temple H."/>
            <person name="Herter T."/>
            <person name="Link B."/>
            <person name="Donas-Cofre D."/>
            <person name="Moreno A."/>
            <person name="Saez-Aguayo S."/>
            <person name="Blanco F."/>
            <person name="Mortimer J.C."/>
            <person name="Schultink A."/>
            <person name="Reiter W.D."/>
            <person name="Dupree P."/>
            <person name="Pauly M."/>
            <person name="Heazlewood J.L."/>
            <person name="Scheller H.V."/>
            <person name="Orellana A."/>
        </authorList>
    </citation>
    <scope>GENE FAMILY</scope>
</reference>
<protein>
    <recommendedName>
        <fullName>Probable sugar phosphate/phosphate translocator At3g14410</fullName>
    </recommendedName>
</protein>
<sequence>MADRSKGFMRAEFVTYAYILLYIALSSGQIFFNKWVLSSKEINFPYPLGLTLLHMIFSSVLCFLLTKVLKIVKVEEGMTLEIYVTSVIPIGAMFAMTLWLGNTAYLYISVAFAQMLKAIMPVAVFILGVAAGLEMMSCRMLLIMSIISFGVLVASYGELNINWIGVVYQMGGVVGEALRLIFMELLVKRKGIKLNPISLMYYVSPCSAICLFVPWIFLEKSKIDGNGPWNFHFVVLTLNSLCTFALNLSVFLVISHTSALTIRVAGVVKDWVVVLVSALLFADTKLTIINLFGYAIAIAGVAAYNNHKLKKEASKVVTTETPGDAESIPLVSQGNTNTER</sequence>
<proteinExistence type="evidence at transcript level"/>
<feature type="chain" id="PRO_0000406112" description="Probable sugar phosphate/phosphate translocator At3g14410">
    <location>
        <begin position="1"/>
        <end position="340"/>
    </location>
</feature>
<feature type="transmembrane region" description="Helical" evidence="1">
    <location>
        <begin position="12"/>
        <end position="32"/>
    </location>
</feature>
<feature type="transmembrane region" description="Helical" evidence="1">
    <location>
        <begin position="44"/>
        <end position="64"/>
    </location>
</feature>
<feature type="transmembrane region" description="Helical" evidence="1">
    <location>
        <begin position="80"/>
        <end position="100"/>
    </location>
</feature>
<feature type="transmembrane region" description="Helical" evidence="1">
    <location>
        <begin position="110"/>
        <end position="130"/>
    </location>
</feature>
<feature type="transmembrane region" description="Helical" evidence="1">
    <location>
        <begin position="141"/>
        <end position="161"/>
    </location>
</feature>
<feature type="transmembrane region" description="Helical" evidence="1">
    <location>
        <begin position="163"/>
        <end position="183"/>
    </location>
</feature>
<feature type="transmembrane region" description="Helical" evidence="1">
    <location>
        <begin position="197"/>
        <end position="217"/>
    </location>
</feature>
<feature type="transmembrane region" description="Helical" evidence="1">
    <location>
        <begin position="234"/>
        <end position="254"/>
    </location>
</feature>
<feature type="transmembrane region" description="Helical" evidence="1">
    <location>
        <begin position="260"/>
        <end position="282"/>
    </location>
</feature>
<feature type="transmembrane region" description="Helical" evidence="1">
    <location>
        <begin position="286"/>
        <end position="305"/>
    </location>
</feature>
<feature type="region of interest" description="Disordered" evidence="2">
    <location>
        <begin position="320"/>
        <end position="340"/>
    </location>
</feature>
<feature type="compositionally biased region" description="Polar residues" evidence="2">
    <location>
        <begin position="330"/>
        <end position="340"/>
    </location>
</feature>
<accession>Q94EI9</accession>
<accession>Q9LUK8</accession>
<organism>
    <name type="scientific">Arabidopsis thaliana</name>
    <name type="common">Mouse-ear cress</name>
    <dbReference type="NCBI Taxonomy" id="3702"/>
    <lineage>
        <taxon>Eukaryota</taxon>
        <taxon>Viridiplantae</taxon>
        <taxon>Streptophyta</taxon>
        <taxon>Embryophyta</taxon>
        <taxon>Tracheophyta</taxon>
        <taxon>Spermatophyta</taxon>
        <taxon>Magnoliopsida</taxon>
        <taxon>eudicotyledons</taxon>
        <taxon>Gunneridae</taxon>
        <taxon>Pentapetalae</taxon>
        <taxon>rosids</taxon>
        <taxon>malvids</taxon>
        <taxon>Brassicales</taxon>
        <taxon>Brassicaceae</taxon>
        <taxon>Camelineae</taxon>
        <taxon>Arabidopsis</taxon>
    </lineage>
</organism>
<dbReference type="EMBL" id="AB022220">
    <property type="protein sequence ID" value="BAB01046.1"/>
    <property type="status" value="ALT_SEQ"/>
    <property type="molecule type" value="Genomic_DNA"/>
</dbReference>
<dbReference type="EMBL" id="CP002686">
    <property type="protein sequence ID" value="AEE75514.1"/>
    <property type="molecule type" value="Genomic_DNA"/>
</dbReference>
<dbReference type="EMBL" id="AF410286">
    <property type="protein sequence ID" value="AAK95272.1"/>
    <property type="molecule type" value="mRNA"/>
</dbReference>
<dbReference type="EMBL" id="AY093729">
    <property type="protein sequence ID" value="AAM10353.1"/>
    <property type="molecule type" value="mRNA"/>
</dbReference>
<dbReference type="RefSeq" id="NP_566487.1">
    <property type="nucleotide sequence ID" value="NM_112300.4"/>
</dbReference>
<dbReference type="SMR" id="Q94EI9"/>
<dbReference type="BioGRID" id="5997">
    <property type="interactions" value="2"/>
</dbReference>
<dbReference type="FunCoup" id="Q94EI9">
    <property type="interactions" value="448"/>
</dbReference>
<dbReference type="IntAct" id="Q94EI9">
    <property type="interactions" value="2"/>
</dbReference>
<dbReference type="STRING" id="3702.Q94EI9"/>
<dbReference type="PaxDb" id="3702-AT3G14410.1"/>
<dbReference type="ProteomicsDB" id="248839"/>
<dbReference type="EnsemblPlants" id="AT3G14410.1">
    <property type="protein sequence ID" value="AT3G14410.1"/>
    <property type="gene ID" value="AT3G14410"/>
</dbReference>
<dbReference type="GeneID" id="820663"/>
<dbReference type="Gramene" id="AT3G14410.1">
    <property type="protein sequence ID" value="AT3G14410.1"/>
    <property type="gene ID" value="AT3G14410"/>
</dbReference>
<dbReference type="KEGG" id="ath:AT3G14410"/>
<dbReference type="Araport" id="AT3G14410"/>
<dbReference type="TAIR" id="AT3G14410"/>
<dbReference type="eggNOG" id="KOG1441">
    <property type="taxonomic scope" value="Eukaryota"/>
</dbReference>
<dbReference type="HOGENOM" id="CLU_022332_3_0_1"/>
<dbReference type="InParanoid" id="Q94EI9"/>
<dbReference type="OMA" id="LFWEVPK"/>
<dbReference type="PhylomeDB" id="Q94EI9"/>
<dbReference type="PRO" id="PR:Q94EI9"/>
<dbReference type="Proteomes" id="UP000006548">
    <property type="component" value="Chromosome 3"/>
</dbReference>
<dbReference type="ExpressionAtlas" id="Q94EI9">
    <property type="expression patterns" value="baseline and differential"/>
</dbReference>
<dbReference type="GO" id="GO:0022626">
    <property type="term" value="C:cytosolic ribosome"/>
    <property type="evidence" value="ECO:0007005"/>
    <property type="project" value="TAIR"/>
</dbReference>
<dbReference type="GO" id="GO:0016020">
    <property type="term" value="C:membrane"/>
    <property type="evidence" value="ECO:0007669"/>
    <property type="project" value="UniProtKB-SubCell"/>
</dbReference>
<dbReference type="InterPro" id="IPR004853">
    <property type="entry name" value="Sugar_P_trans_dom"/>
</dbReference>
<dbReference type="InterPro" id="IPR050186">
    <property type="entry name" value="TPT_transporter"/>
</dbReference>
<dbReference type="PANTHER" id="PTHR11132">
    <property type="entry name" value="SOLUTE CARRIER FAMILY 35"/>
    <property type="match status" value="1"/>
</dbReference>
<dbReference type="Pfam" id="PF03151">
    <property type="entry name" value="TPT"/>
    <property type="match status" value="1"/>
</dbReference>
<dbReference type="SUPFAM" id="SSF103481">
    <property type="entry name" value="Multidrug resistance efflux transporter EmrE"/>
    <property type="match status" value="1"/>
</dbReference>
<evidence type="ECO:0000255" key="1"/>
<evidence type="ECO:0000256" key="2">
    <source>
        <dbReference type="SAM" id="MobiDB-lite"/>
    </source>
</evidence>
<evidence type="ECO:0000305" key="3"/>